<dbReference type="EMBL" id="AC004218">
    <property type="protein sequence ID" value="AAC27842.1"/>
    <property type="molecule type" value="Genomic_DNA"/>
</dbReference>
<dbReference type="EMBL" id="CP002685">
    <property type="protein sequence ID" value="AEC09688.1"/>
    <property type="molecule type" value="Genomic_DNA"/>
</dbReference>
<dbReference type="EMBL" id="BT006205">
    <property type="protein sequence ID" value="AAP12854.1"/>
    <property type="molecule type" value="mRNA"/>
</dbReference>
<dbReference type="EMBL" id="AK227747">
    <property type="protein sequence ID" value="BAE99731.1"/>
    <property type="molecule type" value="mRNA"/>
</dbReference>
<dbReference type="PIR" id="T00561">
    <property type="entry name" value="T00561"/>
</dbReference>
<dbReference type="RefSeq" id="NP_181483.1">
    <property type="nucleotide sequence ID" value="NM_129509.4"/>
</dbReference>
<dbReference type="SMR" id="O80638"/>
<dbReference type="BioGRID" id="3874">
    <property type="interactions" value="21"/>
</dbReference>
<dbReference type="IntAct" id="O80638">
    <property type="interactions" value="21"/>
</dbReference>
<dbReference type="STRING" id="3702.O80638"/>
<dbReference type="TCDB" id="2.A.7.4.5">
    <property type="family name" value="the drug/metabolite transporter (dmt) superfamily"/>
</dbReference>
<dbReference type="iPTMnet" id="O80638"/>
<dbReference type="PaxDb" id="3702-AT2G39510.1"/>
<dbReference type="ProteomicsDB" id="242401"/>
<dbReference type="EnsemblPlants" id="AT2G39510.1">
    <property type="protein sequence ID" value="AT2G39510.1"/>
    <property type="gene ID" value="AT2G39510"/>
</dbReference>
<dbReference type="GeneID" id="818536"/>
<dbReference type="Gramene" id="AT2G39510.1">
    <property type="protein sequence ID" value="AT2G39510.1"/>
    <property type="gene ID" value="AT2G39510"/>
</dbReference>
<dbReference type="KEGG" id="ath:AT2G39510"/>
<dbReference type="Araport" id="AT2G39510"/>
<dbReference type="TAIR" id="AT2G39510">
    <property type="gene designation" value="UMAMIT14"/>
</dbReference>
<dbReference type="eggNOG" id="ENOG502QUF7">
    <property type="taxonomic scope" value="Eukaryota"/>
</dbReference>
<dbReference type="HOGENOM" id="CLU_025359_1_1_1"/>
<dbReference type="InParanoid" id="O80638"/>
<dbReference type="OMA" id="INGPMLN"/>
<dbReference type="PhylomeDB" id="O80638"/>
<dbReference type="PRO" id="PR:O80638"/>
<dbReference type="Proteomes" id="UP000006548">
    <property type="component" value="Chromosome 2"/>
</dbReference>
<dbReference type="ExpressionAtlas" id="O80638">
    <property type="expression patterns" value="baseline and differential"/>
</dbReference>
<dbReference type="GO" id="GO:0005886">
    <property type="term" value="C:plasma membrane"/>
    <property type="evidence" value="ECO:0000314"/>
    <property type="project" value="TAIR"/>
</dbReference>
<dbReference type="GO" id="GO:0015186">
    <property type="term" value="F:L-glutamine transmembrane transporter activity"/>
    <property type="evidence" value="ECO:0000314"/>
    <property type="project" value="TAIR"/>
</dbReference>
<dbReference type="GO" id="GO:0098712">
    <property type="term" value="P:L-glutamate import across plasma membrane"/>
    <property type="evidence" value="ECO:0000314"/>
    <property type="project" value="TAIR"/>
</dbReference>
<dbReference type="GO" id="GO:0048316">
    <property type="term" value="P:seed development"/>
    <property type="evidence" value="ECO:0000315"/>
    <property type="project" value="TAIR"/>
</dbReference>
<dbReference type="InterPro" id="IPR000620">
    <property type="entry name" value="EamA_dom"/>
</dbReference>
<dbReference type="InterPro" id="IPR030184">
    <property type="entry name" value="WAT1-related"/>
</dbReference>
<dbReference type="PANTHER" id="PTHR31218">
    <property type="entry name" value="WAT1-RELATED PROTEIN"/>
    <property type="match status" value="1"/>
</dbReference>
<dbReference type="Pfam" id="PF00892">
    <property type="entry name" value="EamA"/>
    <property type="match status" value="2"/>
</dbReference>
<dbReference type="SUPFAM" id="SSF103481">
    <property type="entry name" value="Multidrug resistance efflux transporter EmrE"/>
    <property type="match status" value="2"/>
</dbReference>
<reference key="1">
    <citation type="journal article" date="1999" name="Nature">
        <title>Sequence and analysis of chromosome 2 of the plant Arabidopsis thaliana.</title>
        <authorList>
            <person name="Lin X."/>
            <person name="Kaul S."/>
            <person name="Rounsley S.D."/>
            <person name="Shea T.P."/>
            <person name="Benito M.-I."/>
            <person name="Town C.D."/>
            <person name="Fujii C.Y."/>
            <person name="Mason T.M."/>
            <person name="Bowman C.L."/>
            <person name="Barnstead M.E."/>
            <person name="Feldblyum T.V."/>
            <person name="Buell C.R."/>
            <person name="Ketchum K.A."/>
            <person name="Lee J.J."/>
            <person name="Ronning C.M."/>
            <person name="Koo H.L."/>
            <person name="Moffat K.S."/>
            <person name="Cronin L.A."/>
            <person name="Shen M."/>
            <person name="Pai G."/>
            <person name="Van Aken S."/>
            <person name="Umayam L."/>
            <person name="Tallon L.J."/>
            <person name="Gill J.E."/>
            <person name="Adams M.D."/>
            <person name="Carrera A.J."/>
            <person name="Creasy T.H."/>
            <person name="Goodman H.M."/>
            <person name="Somerville C.R."/>
            <person name="Copenhaver G.P."/>
            <person name="Preuss D."/>
            <person name="Nierman W.C."/>
            <person name="White O."/>
            <person name="Eisen J.A."/>
            <person name="Salzberg S.L."/>
            <person name="Fraser C.M."/>
            <person name="Venter J.C."/>
        </authorList>
    </citation>
    <scope>NUCLEOTIDE SEQUENCE [LARGE SCALE GENOMIC DNA]</scope>
    <source>
        <strain>cv. Columbia</strain>
    </source>
</reference>
<reference key="2">
    <citation type="journal article" date="2017" name="Plant J.">
        <title>Araport11: a complete reannotation of the Arabidopsis thaliana reference genome.</title>
        <authorList>
            <person name="Cheng C.Y."/>
            <person name="Krishnakumar V."/>
            <person name="Chan A.P."/>
            <person name="Thibaud-Nissen F."/>
            <person name="Schobel S."/>
            <person name="Town C.D."/>
        </authorList>
    </citation>
    <scope>GENOME REANNOTATION</scope>
    <source>
        <strain>cv. Columbia</strain>
    </source>
</reference>
<reference key="3">
    <citation type="journal article" date="2003" name="Science">
        <title>Empirical analysis of transcriptional activity in the Arabidopsis genome.</title>
        <authorList>
            <person name="Yamada K."/>
            <person name="Lim J."/>
            <person name="Dale J.M."/>
            <person name="Chen H."/>
            <person name="Shinn P."/>
            <person name="Palm C.J."/>
            <person name="Southwick A.M."/>
            <person name="Wu H.C."/>
            <person name="Kim C.J."/>
            <person name="Nguyen M."/>
            <person name="Pham P.K."/>
            <person name="Cheuk R.F."/>
            <person name="Karlin-Newmann G."/>
            <person name="Liu S.X."/>
            <person name="Lam B."/>
            <person name="Sakano H."/>
            <person name="Wu T."/>
            <person name="Yu G."/>
            <person name="Miranda M."/>
            <person name="Quach H.L."/>
            <person name="Tripp M."/>
            <person name="Chang C.H."/>
            <person name="Lee J.M."/>
            <person name="Toriumi M.J."/>
            <person name="Chan M.M."/>
            <person name="Tang C.C."/>
            <person name="Onodera C.S."/>
            <person name="Deng J.M."/>
            <person name="Akiyama K."/>
            <person name="Ansari Y."/>
            <person name="Arakawa T."/>
            <person name="Banh J."/>
            <person name="Banno F."/>
            <person name="Bowser L."/>
            <person name="Brooks S.Y."/>
            <person name="Carninci P."/>
            <person name="Chao Q."/>
            <person name="Choy N."/>
            <person name="Enju A."/>
            <person name="Goldsmith A.D."/>
            <person name="Gurjal M."/>
            <person name="Hansen N.F."/>
            <person name="Hayashizaki Y."/>
            <person name="Johnson-Hopson C."/>
            <person name="Hsuan V.W."/>
            <person name="Iida K."/>
            <person name="Karnes M."/>
            <person name="Khan S."/>
            <person name="Koesema E."/>
            <person name="Ishida J."/>
            <person name="Jiang P.X."/>
            <person name="Jones T."/>
            <person name="Kawai J."/>
            <person name="Kamiya A."/>
            <person name="Meyers C."/>
            <person name="Nakajima M."/>
            <person name="Narusaka M."/>
            <person name="Seki M."/>
            <person name="Sakurai T."/>
            <person name="Satou M."/>
            <person name="Tamse R."/>
            <person name="Vaysberg M."/>
            <person name="Wallender E.K."/>
            <person name="Wong C."/>
            <person name="Yamamura Y."/>
            <person name="Yuan S."/>
            <person name="Shinozaki K."/>
            <person name="Davis R.W."/>
            <person name="Theologis A."/>
            <person name="Ecker J.R."/>
        </authorList>
    </citation>
    <scope>NUCLEOTIDE SEQUENCE [LARGE SCALE MRNA]</scope>
    <source>
        <strain>cv. Columbia</strain>
    </source>
</reference>
<reference key="4">
    <citation type="submission" date="2006-07" db="EMBL/GenBank/DDBJ databases">
        <title>Large-scale analysis of RIKEN Arabidopsis full-length (RAFL) cDNAs.</title>
        <authorList>
            <person name="Totoki Y."/>
            <person name="Seki M."/>
            <person name="Ishida J."/>
            <person name="Nakajima M."/>
            <person name="Enju A."/>
            <person name="Kamiya A."/>
            <person name="Narusaka M."/>
            <person name="Shin-i T."/>
            <person name="Nakagawa M."/>
            <person name="Sakamoto N."/>
            <person name="Oishi K."/>
            <person name="Kohara Y."/>
            <person name="Kobayashi M."/>
            <person name="Toyoda A."/>
            <person name="Sakaki Y."/>
            <person name="Sakurai T."/>
            <person name="Iida K."/>
            <person name="Akiyama K."/>
            <person name="Satou M."/>
            <person name="Toyoda T."/>
            <person name="Konagaya A."/>
            <person name="Carninci P."/>
            <person name="Kawai J."/>
            <person name="Hayashizaki Y."/>
            <person name="Shinozaki K."/>
        </authorList>
    </citation>
    <scope>NUCLEOTIDE SEQUENCE [LARGE SCALE MRNA]</scope>
    <source>
        <strain>cv. Columbia</strain>
    </source>
</reference>
<name>WTR14_ARATH</name>
<evidence type="ECO:0000250" key="1"/>
<evidence type="ECO:0000255" key="2"/>
<evidence type="ECO:0000256" key="3">
    <source>
        <dbReference type="SAM" id="MobiDB-lite"/>
    </source>
</evidence>
<evidence type="ECO:0000305" key="4"/>
<protein>
    <recommendedName>
        <fullName>WAT1-related protein At2g39510</fullName>
    </recommendedName>
</protein>
<feature type="chain" id="PRO_0000421322" description="WAT1-related protein At2g39510">
    <location>
        <begin position="1"/>
        <end position="374"/>
    </location>
</feature>
<feature type="transmembrane region" description="Helical" evidence="2">
    <location>
        <begin position="9"/>
        <end position="29"/>
    </location>
</feature>
<feature type="transmembrane region" description="Helical" evidence="2">
    <location>
        <begin position="38"/>
        <end position="58"/>
    </location>
</feature>
<feature type="transmembrane region" description="Helical" evidence="2">
    <location>
        <begin position="64"/>
        <end position="84"/>
    </location>
</feature>
<feature type="transmembrane region" description="Helical" evidence="2">
    <location>
        <begin position="99"/>
        <end position="119"/>
    </location>
</feature>
<feature type="transmembrane region" description="Helical" evidence="2">
    <location>
        <begin position="135"/>
        <end position="155"/>
    </location>
</feature>
<feature type="transmembrane region" description="Helical" evidence="2">
    <location>
        <begin position="182"/>
        <end position="202"/>
    </location>
</feature>
<feature type="transmembrane region" description="Helical" evidence="2">
    <location>
        <begin position="212"/>
        <end position="232"/>
    </location>
</feature>
<feature type="transmembrane region" description="Helical" evidence="2">
    <location>
        <begin position="249"/>
        <end position="269"/>
    </location>
</feature>
<feature type="transmembrane region" description="Helical" evidence="2">
    <location>
        <begin position="284"/>
        <end position="304"/>
    </location>
</feature>
<feature type="transmembrane region" description="Helical" evidence="2">
    <location>
        <begin position="306"/>
        <end position="326"/>
    </location>
</feature>
<feature type="domain" description="EamA 1">
    <location>
        <begin position="19"/>
        <end position="147"/>
    </location>
</feature>
<feature type="domain" description="EamA 2">
    <location>
        <begin position="191"/>
        <end position="320"/>
    </location>
</feature>
<feature type="region of interest" description="Disordered" evidence="3">
    <location>
        <begin position="350"/>
        <end position="374"/>
    </location>
</feature>
<sequence>MALKTWKPFITVVSLQFGYAGLSIIAKFALNQGMSPHVLASYRHIVATIFIAPFAYFLDRKIRPKMTLSIFFKILLLGLLEPTIDQNLYYTGMKYTSATFTAAMTNVLPAFAFIMAWIFRLEKVNVKKIHSQAKILGTIVTVGGAMLMTVVKGPLIPLPWANPHDIHQDSSNTGVKQDLTKGASLIAIGCICWAGFINLQAITLKSYPVELSLTAYICFLGSIESTIVALFIERGNPSAWAIHLDSKLLAAVYGGVICSGIGYYVQGVIMKTRGPVFVTAFNPLSMVIVAILGSIILAEVMFLGRILGAIVIVLGLYSVLWGKSKDEPSSSFSDMDKELPLSTPQIVLPSKANAKMDTNDASVVISRPNTNESV</sequence>
<gene>
    <name type="ordered locus">At2g39510</name>
    <name type="ORF">F12L6.17</name>
</gene>
<keyword id="KW-0472">Membrane</keyword>
<keyword id="KW-1185">Reference proteome</keyword>
<keyword id="KW-0677">Repeat</keyword>
<keyword id="KW-0812">Transmembrane</keyword>
<keyword id="KW-1133">Transmembrane helix</keyword>
<accession>O80638</accession>
<proteinExistence type="evidence at transcript level"/>
<organism>
    <name type="scientific">Arabidopsis thaliana</name>
    <name type="common">Mouse-ear cress</name>
    <dbReference type="NCBI Taxonomy" id="3702"/>
    <lineage>
        <taxon>Eukaryota</taxon>
        <taxon>Viridiplantae</taxon>
        <taxon>Streptophyta</taxon>
        <taxon>Embryophyta</taxon>
        <taxon>Tracheophyta</taxon>
        <taxon>Spermatophyta</taxon>
        <taxon>Magnoliopsida</taxon>
        <taxon>eudicotyledons</taxon>
        <taxon>Gunneridae</taxon>
        <taxon>Pentapetalae</taxon>
        <taxon>rosids</taxon>
        <taxon>malvids</taxon>
        <taxon>Brassicales</taxon>
        <taxon>Brassicaceae</taxon>
        <taxon>Camelineae</taxon>
        <taxon>Arabidopsis</taxon>
    </lineage>
</organism>
<comment type="subcellular location">
    <subcellularLocation>
        <location evidence="1">Membrane</location>
        <topology evidence="4">Multi-pass membrane protein</topology>
    </subcellularLocation>
</comment>
<comment type="similarity">
    <text evidence="4">Belongs to the drug/metabolite transporter (DMT) superfamily. Plant drug/metabolite exporter (P-DME) (TC 2.A.7.4) family.</text>
</comment>